<evidence type="ECO:0000255" key="1">
    <source>
        <dbReference type="HAMAP-Rule" id="MF_01017"/>
    </source>
</evidence>
<organism>
    <name type="scientific">Escherichia coli O139:H28 (strain E24377A / ETEC)</name>
    <dbReference type="NCBI Taxonomy" id="331111"/>
    <lineage>
        <taxon>Bacteria</taxon>
        <taxon>Pseudomonadati</taxon>
        <taxon>Pseudomonadota</taxon>
        <taxon>Gammaproteobacteria</taxon>
        <taxon>Enterobacterales</taxon>
        <taxon>Enterobacteriaceae</taxon>
        <taxon>Escherichia</taxon>
    </lineage>
</organism>
<name>NQOR_ECO24</name>
<sequence length="198" mass="20846">MAKVLVLYYSMYGHIETMARAVAEGASKVDGAEVVVKRVPETMPPQLFEKAGGKTQTAPVATPQELADYDAIIFGTPTRFGNMSGQMRTFLDQTGGLWASGALYGKLASVFSSTGTGGGQEQTITSTWTTLAHHGMVIVPIGYAAQELFDVSQVRGGTPYGATTIAGGDGSRQPSQEELSIARYQGEYVAGLAVKLNG</sequence>
<reference key="1">
    <citation type="journal article" date="2008" name="J. Bacteriol.">
        <title>The pangenome structure of Escherichia coli: comparative genomic analysis of E. coli commensal and pathogenic isolates.</title>
        <authorList>
            <person name="Rasko D.A."/>
            <person name="Rosovitz M.J."/>
            <person name="Myers G.S.A."/>
            <person name="Mongodin E.F."/>
            <person name="Fricke W.F."/>
            <person name="Gajer P."/>
            <person name="Crabtree J."/>
            <person name="Sebaihia M."/>
            <person name="Thomson N.R."/>
            <person name="Chaudhuri R."/>
            <person name="Henderson I.R."/>
            <person name="Sperandio V."/>
            <person name="Ravel J."/>
        </authorList>
    </citation>
    <scope>NUCLEOTIDE SEQUENCE [LARGE SCALE GENOMIC DNA]</scope>
    <source>
        <strain>E24377A / ETEC</strain>
    </source>
</reference>
<dbReference type="EC" id="1.6.5.2" evidence="1"/>
<dbReference type="EMBL" id="CP000800">
    <property type="protein sequence ID" value="ABV19853.1"/>
    <property type="molecule type" value="Genomic_DNA"/>
</dbReference>
<dbReference type="SMR" id="A7ZKA9"/>
<dbReference type="KEGG" id="ecw:EcE24377A_1122"/>
<dbReference type="HOGENOM" id="CLU_051402_0_2_6"/>
<dbReference type="Proteomes" id="UP000001122">
    <property type="component" value="Chromosome"/>
</dbReference>
<dbReference type="GO" id="GO:0016020">
    <property type="term" value="C:membrane"/>
    <property type="evidence" value="ECO:0007669"/>
    <property type="project" value="TreeGrafter"/>
</dbReference>
<dbReference type="GO" id="GO:0050660">
    <property type="term" value="F:flavin adenine dinucleotide binding"/>
    <property type="evidence" value="ECO:0007669"/>
    <property type="project" value="UniProtKB-UniRule"/>
</dbReference>
<dbReference type="GO" id="GO:0010181">
    <property type="term" value="F:FMN binding"/>
    <property type="evidence" value="ECO:0007669"/>
    <property type="project" value="InterPro"/>
</dbReference>
<dbReference type="GO" id="GO:0051287">
    <property type="term" value="F:NAD binding"/>
    <property type="evidence" value="ECO:0007669"/>
    <property type="project" value="UniProtKB-UniRule"/>
</dbReference>
<dbReference type="GO" id="GO:0050136">
    <property type="term" value="F:NADH:ubiquinone reductase (non-electrogenic) activity"/>
    <property type="evidence" value="ECO:0007669"/>
    <property type="project" value="RHEA"/>
</dbReference>
<dbReference type="GO" id="GO:0050661">
    <property type="term" value="F:NADP binding"/>
    <property type="evidence" value="ECO:0007669"/>
    <property type="project" value="UniProtKB-UniRule"/>
</dbReference>
<dbReference type="GO" id="GO:0008753">
    <property type="term" value="F:NADPH dehydrogenase (quinone) activity"/>
    <property type="evidence" value="ECO:0007669"/>
    <property type="project" value="RHEA"/>
</dbReference>
<dbReference type="FunFam" id="3.40.50.360:FF:000004">
    <property type="entry name" value="NAD(P)H dehydrogenase (quinone)"/>
    <property type="match status" value="1"/>
</dbReference>
<dbReference type="Gene3D" id="3.40.50.360">
    <property type="match status" value="1"/>
</dbReference>
<dbReference type="HAMAP" id="MF_01017">
    <property type="entry name" value="NQOR"/>
    <property type="match status" value="1"/>
</dbReference>
<dbReference type="InterPro" id="IPR008254">
    <property type="entry name" value="Flavodoxin/NO_synth"/>
</dbReference>
<dbReference type="InterPro" id="IPR029039">
    <property type="entry name" value="Flavoprotein-like_sf"/>
</dbReference>
<dbReference type="InterPro" id="IPR010089">
    <property type="entry name" value="Flavoprotein_WrbA-like"/>
</dbReference>
<dbReference type="InterPro" id="IPR005025">
    <property type="entry name" value="FMN_Rdtase-like_dom"/>
</dbReference>
<dbReference type="InterPro" id="IPR037513">
    <property type="entry name" value="NQO"/>
</dbReference>
<dbReference type="NCBIfam" id="TIGR01755">
    <property type="entry name" value="flav_wrbA"/>
    <property type="match status" value="1"/>
</dbReference>
<dbReference type="NCBIfam" id="NF002999">
    <property type="entry name" value="PRK03767.1"/>
    <property type="match status" value="1"/>
</dbReference>
<dbReference type="PANTHER" id="PTHR30546">
    <property type="entry name" value="FLAVODOXIN-RELATED PROTEIN WRBA-RELATED"/>
    <property type="match status" value="1"/>
</dbReference>
<dbReference type="PANTHER" id="PTHR30546:SF23">
    <property type="entry name" value="FLAVOPROTEIN-LIKE PROTEIN YCP4-RELATED"/>
    <property type="match status" value="1"/>
</dbReference>
<dbReference type="Pfam" id="PF03358">
    <property type="entry name" value="FMN_red"/>
    <property type="match status" value="1"/>
</dbReference>
<dbReference type="SUPFAM" id="SSF52218">
    <property type="entry name" value="Flavoproteins"/>
    <property type="match status" value="1"/>
</dbReference>
<dbReference type="PROSITE" id="PS50902">
    <property type="entry name" value="FLAVODOXIN_LIKE"/>
    <property type="match status" value="1"/>
</dbReference>
<protein>
    <recommendedName>
        <fullName evidence="1">NAD(P)H dehydrogenase (quinone)</fullName>
        <ecNumber evidence="1">1.6.5.2</ecNumber>
    </recommendedName>
    <alternativeName>
        <fullName>Flavoprotein WrbA</fullName>
    </alternativeName>
    <alternativeName>
        <fullName evidence="1">NAD(P)H:quinone oxidoreductase</fullName>
        <shortName evidence="1">NQO</shortName>
    </alternativeName>
</protein>
<accession>A7ZKA9</accession>
<proteinExistence type="inferred from homology"/>
<feature type="chain" id="PRO_1000084136" description="NAD(P)H dehydrogenase (quinone)">
    <location>
        <begin position="1"/>
        <end position="198"/>
    </location>
</feature>
<feature type="domain" description="Flavodoxin-like" evidence="1">
    <location>
        <begin position="4"/>
        <end position="189"/>
    </location>
</feature>
<feature type="binding site" evidence="1">
    <location>
        <begin position="10"/>
        <end position="15"/>
    </location>
    <ligand>
        <name>FMN</name>
        <dbReference type="ChEBI" id="CHEBI:58210"/>
    </ligand>
</feature>
<feature type="binding site" evidence="1">
    <location>
        <position position="12"/>
    </location>
    <ligand>
        <name>NAD(+)</name>
        <dbReference type="ChEBI" id="CHEBI:57540"/>
    </ligand>
</feature>
<feature type="binding site" evidence="1">
    <location>
        <begin position="78"/>
        <end position="80"/>
    </location>
    <ligand>
        <name>FMN</name>
        <dbReference type="ChEBI" id="CHEBI:58210"/>
    </ligand>
</feature>
<feature type="binding site" evidence="1">
    <location>
        <position position="98"/>
    </location>
    <ligand>
        <name>substrate</name>
    </ligand>
</feature>
<feature type="binding site" evidence="1">
    <location>
        <begin position="113"/>
        <end position="118"/>
    </location>
    <ligand>
        <name>FMN</name>
        <dbReference type="ChEBI" id="CHEBI:58210"/>
    </ligand>
</feature>
<feature type="binding site" evidence="1">
    <location>
        <position position="133"/>
    </location>
    <ligand>
        <name>FMN</name>
        <dbReference type="ChEBI" id="CHEBI:58210"/>
    </ligand>
</feature>
<comment type="catalytic activity">
    <reaction evidence="1">
        <text>a quinone + NADH + H(+) = a quinol + NAD(+)</text>
        <dbReference type="Rhea" id="RHEA:46160"/>
        <dbReference type="ChEBI" id="CHEBI:15378"/>
        <dbReference type="ChEBI" id="CHEBI:24646"/>
        <dbReference type="ChEBI" id="CHEBI:57540"/>
        <dbReference type="ChEBI" id="CHEBI:57945"/>
        <dbReference type="ChEBI" id="CHEBI:132124"/>
        <dbReference type="EC" id="1.6.5.2"/>
    </reaction>
</comment>
<comment type="catalytic activity">
    <reaction evidence="1">
        <text>a quinone + NADPH + H(+) = a quinol + NADP(+)</text>
        <dbReference type="Rhea" id="RHEA:46164"/>
        <dbReference type="ChEBI" id="CHEBI:15378"/>
        <dbReference type="ChEBI" id="CHEBI:24646"/>
        <dbReference type="ChEBI" id="CHEBI:57783"/>
        <dbReference type="ChEBI" id="CHEBI:58349"/>
        <dbReference type="ChEBI" id="CHEBI:132124"/>
        <dbReference type="EC" id="1.6.5.2"/>
    </reaction>
</comment>
<comment type="cofactor">
    <cofactor evidence="1">
        <name>FMN</name>
        <dbReference type="ChEBI" id="CHEBI:58210"/>
    </cofactor>
    <text evidence="1">Binds 1 FMN per monomer.</text>
</comment>
<comment type="similarity">
    <text evidence="1">Belongs to the WrbA family.</text>
</comment>
<keyword id="KW-0285">Flavoprotein</keyword>
<keyword id="KW-0288">FMN</keyword>
<keyword id="KW-0520">NAD</keyword>
<keyword id="KW-0521">NADP</keyword>
<keyword id="KW-0547">Nucleotide-binding</keyword>
<keyword id="KW-0560">Oxidoreductase</keyword>
<keyword id="KW-1185">Reference proteome</keyword>
<gene>
    <name type="ordered locus">EcE24377A_1122</name>
</gene>